<feature type="chain" id="PRO_0000129585" description="Large ribosomal subunit protein uL2">
    <location>
        <begin position="1"/>
        <end position="287"/>
    </location>
</feature>
<feature type="region of interest" description="Disordered" evidence="2">
    <location>
        <begin position="222"/>
        <end position="266"/>
    </location>
</feature>
<feature type="strand" evidence="5">
    <location>
        <begin position="3"/>
        <end position="5"/>
    </location>
</feature>
<feature type="strand" evidence="5">
    <location>
        <begin position="11"/>
        <end position="13"/>
    </location>
</feature>
<feature type="strand" evidence="5">
    <location>
        <begin position="18"/>
        <end position="20"/>
    </location>
</feature>
<feature type="strand" evidence="5">
    <location>
        <begin position="23"/>
        <end position="27"/>
    </location>
</feature>
<feature type="helix" evidence="4">
    <location>
        <begin position="35"/>
        <end position="37"/>
    </location>
</feature>
<feature type="strand" evidence="5">
    <location>
        <begin position="38"/>
        <end position="40"/>
    </location>
</feature>
<feature type="strand" evidence="5">
    <location>
        <begin position="51"/>
        <end position="53"/>
    </location>
</feature>
<feature type="strand" evidence="5">
    <location>
        <begin position="55"/>
        <end position="58"/>
    </location>
</feature>
<feature type="strand" evidence="5">
    <location>
        <begin position="65"/>
        <end position="67"/>
    </location>
</feature>
<feature type="turn" evidence="5">
    <location>
        <begin position="75"/>
        <end position="78"/>
    </location>
</feature>
<feature type="strand" evidence="5">
    <location>
        <begin position="81"/>
        <end position="87"/>
    </location>
</feature>
<feature type="strand" evidence="5">
    <location>
        <begin position="92"/>
        <end position="94"/>
    </location>
</feature>
<feature type="strand" evidence="5">
    <location>
        <begin position="96"/>
        <end position="101"/>
    </location>
</feature>
<feature type="turn" evidence="4">
    <location>
        <begin position="102"/>
        <end position="104"/>
    </location>
</feature>
<feature type="strand" evidence="5">
    <location>
        <begin position="106"/>
        <end position="110"/>
    </location>
</feature>
<feature type="strand" evidence="5">
    <location>
        <begin position="135"/>
        <end position="137"/>
    </location>
</feature>
<feature type="helix" evidence="4">
    <location>
        <begin position="138"/>
        <end position="140"/>
    </location>
</feature>
<feature type="strand" evidence="5">
    <location>
        <begin position="147"/>
        <end position="153"/>
    </location>
</feature>
<feature type="strand" evidence="5">
    <location>
        <begin position="158"/>
        <end position="161"/>
    </location>
</feature>
<feature type="strand" evidence="5">
    <location>
        <begin position="168"/>
        <end position="170"/>
    </location>
</feature>
<feature type="strand" evidence="4">
    <location>
        <begin position="175"/>
        <end position="178"/>
    </location>
</feature>
<feature type="strand" evidence="5">
    <location>
        <begin position="180"/>
        <end position="183"/>
    </location>
</feature>
<feature type="helix" evidence="5">
    <location>
        <begin position="185"/>
        <end position="187"/>
    </location>
</feature>
<feature type="strand" evidence="5">
    <location>
        <begin position="188"/>
        <end position="192"/>
    </location>
</feature>
<feature type="strand" evidence="5">
    <location>
        <begin position="197"/>
        <end position="201"/>
    </location>
</feature>
<feature type="strand" evidence="5">
    <location>
        <begin position="208"/>
        <end position="210"/>
    </location>
</feature>
<feature type="helix" evidence="5">
    <location>
        <begin position="216"/>
        <end position="222"/>
    </location>
</feature>
<feature type="helix" evidence="5">
    <location>
        <begin position="230"/>
        <end position="232"/>
    </location>
</feature>
<feature type="strand" evidence="5">
    <location>
        <begin position="235"/>
        <end position="238"/>
    </location>
</feature>
<feature type="strand" evidence="5">
    <location>
        <begin position="244"/>
        <end position="246"/>
    </location>
</feature>
<feature type="strand" evidence="5">
    <location>
        <begin position="251"/>
        <end position="253"/>
    </location>
</feature>
<feature type="strand" evidence="4">
    <location>
        <begin position="257"/>
        <end position="259"/>
    </location>
</feature>
<feature type="strand" evidence="5">
    <location>
        <begin position="270"/>
        <end position="272"/>
    </location>
</feature>
<feature type="helix" evidence="5">
    <location>
        <begin position="275"/>
        <end position="277"/>
    </location>
</feature>
<feature type="strand" evidence="5">
    <location>
        <begin position="278"/>
        <end position="285"/>
    </location>
</feature>
<protein>
    <recommendedName>
        <fullName evidence="1">Large ribosomal subunit protein uL2</fullName>
    </recommendedName>
    <alternativeName>
        <fullName evidence="3">50S ribosomal protein L2</fullName>
    </alternativeName>
</protein>
<reference key="1">
    <citation type="journal article" date="1996" name="Nucleic Acids Res.">
        <title>Complete sequence analysis of the genome of the bacterium Mycoplasma pneumoniae.</title>
        <authorList>
            <person name="Himmelreich R."/>
            <person name="Hilbert H."/>
            <person name="Plagens H."/>
            <person name="Pirkl E."/>
            <person name="Li B.-C."/>
            <person name="Herrmann R."/>
        </authorList>
    </citation>
    <scope>NUCLEOTIDE SEQUENCE [LARGE SCALE GENOMIC DNA]</scope>
    <source>
        <strain>ATCC 29342 / M129 / Subtype 1</strain>
    </source>
</reference>
<accession>P75577</accession>
<dbReference type="EMBL" id="U00089">
    <property type="protein sequence ID" value="AAB96311.1"/>
    <property type="molecule type" value="Genomic_DNA"/>
</dbReference>
<dbReference type="PIR" id="S73989">
    <property type="entry name" value="S73989"/>
</dbReference>
<dbReference type="RefSeq" id="NP_109856.1">
    <property type="nucleotide sequence ID" value="NC_000912.1"/>
</dbReference>
<dbReference type="RefSeq" id="WP_010874525.1">
    <property type="nucleotide sequence ID" value="NZ_OU342337.1"/>
</dbReference>
<dbReference type="PDB" id="7OOD">
    <property type="method" value="EM"/>
    <property type="resolution" value="3.40 A"/>
    <property type="chains" value="a=1-287"/>
</dbReference>
<dbReference type="PDB" id="7P6Z">
    <property type="method" value="EM"/>
    <property type="resolution" value="3.50 A"/>
    <property type="chains" value="a=1-287"/>
</dbReference>
<dbReference type="PDB" id="7PAH">
    <property type="method" value="EM"/>
    <property type="resolution" value="9.50 A"/>
    <property type="chains" value="a=1-287"/>
</dbReference>
<dbReference type="PDB" id="7PAI">
    <property type="method" value="EM"/>
    <property type="resolution" value="6.70 A"/>
    <property type="chains" value="a=1-287"/>
</dbReference>
<dbReference type="PDB" id="7PAJ">
    <property type="method" value="EM"/>
    <property type="resolution" value="7.30 A"/>
    <property type="chains" value="a=1-287"/>
</dbReference>
<dbReference type="PDB" id="7PAK">
    <property type="method" value="EM"/>
    <property type="resolution" value="5.30 A"/>
    <property type="chains" value="a=1-287"/>
</dbReference>
<dbReference type="PDB" id="7PAL">
    <property type="method" value="EM"/>
    <property type="resolution" value="4.70 A"/>
    <property type="chains" value="a=1-287"/>
</dbReference>
<dbReference type="PDB" id="7PAM">
    <property type="method" value="EM"/>
    <property type="resolution" value="6.80 A"/>
    <property type="chains" value="a=1-287"/>
</dbReference>
<dbReference type="PDB" id="7PAN">
    <property type="method" value="EM"/>
    <property type="resolution" value="9.70 A"/>
    <property type="chains" value="a=1-287"/>
</dbReference>
<dbReference type="PDB" id="7PAO">
    <property type="method" value="EM"/>
    <property type="resolution" value="7.00 A"/>
    <property type="chains" value="a=1-287"/>
</dbReference>
<dbReference type="PDB" id="7PAQ">
    <property type="method" value="EM"/>
    <property type="resolution" value="8.90 A"/>
    <property type="chains" value="a=1-287"/>
</dbReference>
<dbReference type="PDB" id="7PAR">
    <property type="method" value="EM"/>
    <property type="resolution" value="8.20 A"/>
    <property type="chains" value="a=1-287"/>
</dbReference>
<dbReference type="PDB" id="7PAS">
    <property type="method" value="EM"/>
    <property type="resolution" value="16.00 A"/>
    <property type="chains" value="a=1-287"/>
</dbReference>
<dbReference type="PDB" id="7PAT">
    <property type="method" value="EM"/>
    <property type="resolution" value="9.20 A"/>
    <property type="chains" value="a=1-287"/>
</dbReference>
<dbReference type="PDB" id="7PAU">
    <property type="method" value="EM"/>
    <property type="resolution" value="8.30 A"/>
    <property type="chains" value="a=1-287"/>
</dbReference>
<dbReference type="PDB" id="7PH9">
    <property type="method" value="EM"/>
    <property type="resolution" value="8.70 A"/>
    <property type="chains" value="a=1-287"/>
</dbReference>
<dbReference type="PDB" id="7PHA">
    <property type="method" value="EM"/>
    <property type="resolution" value="8.50 A"/>
    <property type="chains" value="a=1-287"/>
</dbReference>
<dbReference type="PDB" id="7PHB">
    <property type="method" value="EM"/>
    <property type="resolution" value="4.90 A"/>
    <property type="chains" value="a=1-287"/>
</dbReference>
<dbReference type="PDB" id="7PHC">
    <property type="method" value="EM"/>
    <property type="resolution" value="9.90 A"/>
    <property type="chains" value="a=1-287"/>
</dbReference>
<dbReference type="PDB" id="7PI8">
    <property type="method" value="EM"/>
    <property type="resolution" value="8.90 A"/>
    <property type="chains" value="a=1-287"/>
</dbReference>
<dbReference type="PDB" id="7PI9">
    <property type="method" value="EM"/>
    <property type="resolution" value="6.30 A"/>
    <property type="chains" value="a=1-287"/>
</dbReference>
<dbReference type="PDB" id="7PIA">
    <property type="method" value="EM"/>
    <property type="resolution" value="13.60 A"/>
    <property type="chains" value="a=1-287"/>
</dbReference>
<dbReference type="PDB" id="7PIB">
    <property type="method" value="EM"/>
    <property type="resolution" value="4.70 A"/>
    <property type="chains" value="a=1-287"/>
</dbReference>
<dbReference type="PDB" id="7PIC">
    <property type="method" value="EM"/>
    <property type="resolution" value="9.10 A"/>
    <property type="chains" value="a=1-287"/>
</dbReference>
<dbReference type="PDB" id="7PIO">
    <property type="method" value="EM"/>
    <property type="resolution" value="9.50 A"/>
    <property type="chains" value="a=1-287"/>
</dbReference>
<dbReference type="PDB" id="7PIP">
    <property type="method" value="EM"/>
    <property type="resolution" value="9.30 A"/>
    <property type="chains" value="a=1-287"/>
</dbReference>
<dbReference type="PDB" id="7PIQ">
    <property type="method" value="EM"/>
    <property type="resolution" value="9.70 A"/>
    <property type="chains" value="a=1-287"/>
</dbReference>
<dbReference type="PDB" id="7PIR">
    <property type="method" value="EM"/>
    <property type="resolution" value="12.10 A"/>
    <property type="chains" value="a=1-287"/>
</dbReference>
<dbReference type="PDB" id="7PIS">
    <property type="method" value="EM"/>
    <property type="resolution" value="15.00 A"/>
    <property type="chains" value="a=1-287"/>
</dbReference>
<dbReference type="PDB" id="7PIT">
    <property type="method" value="EM"/>
    <property type="resolution" value="5.70 A"/>
    <property type="chains" value="a=1-287"/>
</dbReference>
<dbReference type="PDB" id="8P7X">
    <property type="method" value="EM"/>
    <property type="resolution" value="3.03 A"/>
    <property type="chains" value="a=1-287"/>
</dbReference>
<dbReference type="PDB" id="8P7Y">
    <property type="method" value="EM"/>
    <property type="resolution" value="3.70 A"/>
    <property type="chains" value="a=1-287"/>
</dbReference>
<dbReference type="PDB" id="8P8B">
    <property type="method" value="EM"/>
    <property type="resolution" value="2.90 A"/>
    <property type="chains" value="a=1-287"/>
</dbReference>
<dbReference type="PDB" id="8P8V">
    <property type="method" value="EM"/>
    <property type="resolution" value="8.70 A"/>
    <property type="chains" value="a=1-287"/>
</dbReference>
<dbReference type="PDB" id="8P8W">
    <property type="method" value="EM"/>
    <property type="resolution" value="8.70 A"/>
    <property type="chains" value="a=1-287"/>
</dbReference>
<dbReference type="PDBsum" id="7OOD"/>
<dbReference type="PDBsum" id="7P6Z"/>
<dbReference type="PDBsum" id="7PAH"/>
<dbReference type="PDBsum" id="7PAI"/>
<dbReference type="PDBsum" id="7PAJ"/>
<dbReference type="PDBsum" id="7PAK"/>
<dbReference type="PDBsum" id="7PAL"/>
<dbReference type="PDBsum" id="7PAM"/>
<dbReference type="PDBsum" id="7PAN"/>
<dbReference type="PDBsum" id="7PAO"/>
<dbReference type="PDBsum" id="7PAQ"/>
<dbReference type="PDBsum" id="7PAR"/>
<dbReference type="PDBsum" id="7PAS"/>
<dbReference type="PDBsum" id="7PAT"/>
<dbReference type="PDBsum" id="7PAU"/>
<dbReference type="PDBsum" id="7PH9"/>
<dbReference type="PDBsum" id="7PHA"/>
<dbReference type="PDBsum" id="7PHB"/>
<dbReference type="PDBsum" id="7PHC"/>
<dbReference type="PDBsum" id="7PI8"/>
<dbReference type="PDBsum" id="7PI9"/>
<dbReference type="PDBsum" id="7PIA"/>
<dbReference type="PDBsum" id="7PIB"/>
<dbReference type="PDBsum" id="7PIC"/>
<dbReference type="PDBsum" id="7PIO"/>
<dbReference type="PDBsum" id="7PIP"/>
<dbReference type="PDBsum" id="7PIQ"/>
<dbReference type="PDBsum" id="7PIR"/>
<dbReference type="PDBsum" id="7PIS"/>
<dbReference type="PDBsum" id="7PIT"/>
<dbReference type="PDBsum" id="8P7X"/>
<dbReference type="PDBsum" id="8P7Y"/>
<dbReference type="PDBsum" id="8P8B"/>
<dbReference type="PDBsum" id="8P8V"/>
<dbReference type="PDBsum" id="8P8W"/>
<dbReference type="EMDB" id="EMD-13234"/>
<dbReference type="EMDB" id="EMD-13272"/>
<dbReference type="EMDB" id="EMD-13273"/>
<dbReference type="EMDB" id="EMD-13274"/>
<dbReference type="EMDB" id="EMD-13275"/>
<dbReference type="EMDB" id="EMD-13276"/>
<dbReference type="EMDB" id="EMD-13277"/>
<dbReference type="EMDB" id="EMD-13278"/>
<dbReference type="EMDB" id="EMD-13279"/>
<dbReference type="EMDB" id="EMD-13280"/>
<dbReference type="EMDB" id="EMD-13281"/>
<dbReference type="EMDB" id="EMD-13282"/>
<dbReference type="EMDB" id="EMD-13285"/>
<dbReference type="EMDB" id="EMD-13286"/>
<dbReference type="EMDB" id="EMD-13410"/>
<dbReference type="EMDB" id="EMD-13411"/>
<dbReference type="EMDB" id="EMD-13412"/>
<dbReference type="EMDB" id="EMD-13413"/>
<dbReference type="EMDB" id="EMD-13432"/>
<dbReference type="EMDB" id="EMD-13433"/>
<dbReference type="EMDB" id="EMD-13434"/>
<dbReference type="EMDB" id="EMD-13435"/>
<dbReference type="EMDB" id="EMD-13436"/>
<dbReference type="EMDB" id="EMD-13445"/>
<dbReference type="EMDB" id="EMD-13446"/>
<dbReference type="EMDB" id="EMD-13447"/>
<dbReference type="EMDB" id="EMD-13448"/>
<dbReference type="EMDB" id="EMD-13449"/>
<dbReference type="EMDB" id="EMD-13450"/>
<dbReference type="SMR" id="P75577"/>
<dbReference type="IntAct" id="P75577">
    <property type="interactions" value="2"/>
</dbReference>
<dbReference type="STRING" id="272634.MPN_168"/>
<dbReference type="EnsemblBacteria" id="AAB96311">
    <property type="protein sequence ID" value="AAB96311"/>
    <property type="gene ID" value="MPN_168"/>
</dbReference>
<dbReference type="GeneID" id="66609184"/>
<dbReference type="KEGG" id="mpn:MPN_168"/>
<dbReference type="PATRIC" id="fig|272634.6.peg.186"/>
<dbReference type="HOGENOM" id="CLU_036235_2_1_14"/>
<dbReference type="OrthoDB" id="9778722at2"/>
<dbReference type="BioCyc" id="MPNE272634:G1GJ3-278-MONOMER"/>
<dbReference type="Proteomes" id="UP000000808">
    <property type="component" value="Chromosome"/>
</dbReference>
<dbReference type="GO" id="GO:0015934">
    <property type="term" value="C:large ribosomal subunit"/>
    <property type="evidence" value="ECO:0007669"/>
    <property type="project" value="InterPro"/>
</dbReference>
<dbReference type="GO" id="GO:0019843">
    <property type="term" value="F:rRNA binding"/>
    <property type="evidence" value="ECO:0007669"/>
    <property type="project" value="UniProtKB-UniRule"/>
</dbReference>
<dbReference type="GO" id="GO:0003735">
    <property type="term" value="F:structural constituent of ribosome"/>
    <property type="evidence" value="ECO:0007669"/>
    <property type="project" value="InterPro"/>
</dbReference>
<dbReference type="GO" id="GO:0016740">
    <property type="term" value="F:transferase activity"/>
    <property type="evidence" value="ECO:0007669"/>
    <property type="project" value="InterPro"/>
</dbReference>
<dbReference type="GO" id="GO:0002181">
    <property type="term" value="P:cytoplasmic translation"/>
    <property type="evidence" value="ECO:0007669"/>
    <property type="project" value="TreeGrafter"/>
</dbReference>
<dbReference type="FunFam" id="2.30.30.30:FF:000001">
    <property type="entry name" value="50S ribosomal protein L2"/>
    <property type="match status" value="1"/>
</dbReference>
<dbReference type="FunFam" id="4.10.950.10:FF:000001">
    <property type="entry name" value="50S ribosomal protein L2"/>
    <property type="match status" value="1"/>
</dbReference>
<dbReference type="Gene3D" id="2.30.30.30">
    <property type="match status" value="1"/>
</dbReference>
<dbReference type="Gene3D" id="2.40.50.140">
    <property type="entry name" value="Nucleic acid-binding proteins"/>
    <property type="match status" value="1"/>
</dbReference>
<dbReference type="Gene3D" id="4.10.950.10">
    <property type="entry name" value="Ribosomal protein L2, domain 3"/>
    <property type="match status" value="1"/>
</dbReference>
<dbReference type="HAMAP" id="MF_01320_B">
    <property type="entry name" value="Ribosomal_uL2_B"/>
    <property type="match status" value="1"/>
</dbReference>
<dbReference type="InterPro" id="IPR012340">
    <property type="entry name" value="NA-bd_OB-fold"/>
</dbReference>
<dbReference type="InterPro" id="IPR014722">
    <property type="entry name" value="Rib_uL2_dom2"/>
</dbReference>
<dbReference type="InterPro" id="IPR002171">
    <property type="entry name" value="Ribosomal_uL2"/>
</dbReference>
<dbReference type="InterPro" id="IPR005880">
    <property type="entry name" value="Ribosomal_uL2_bac/org-type"/>
</dbReference>
<dbReference type="InterPro" id="IPR022669">
    <property type="entry name" value="Ribosomal_uL2_C"/>
</dbReference>
<dbReference type="InterPro" id="IPR022671">
    <property type="entry name" value="Ribosomal_uL2_CS"/>
</dbReference>
<dbReference type="InterPro" id="IPR014726">
    <property type="entry name" value="Ribosomal_uL2_dom3"/>
</dbReference>
<dbReference type="InterPro" id="IPR022666">
    <property type="entry name" value="Ribosomal_uL2_RNA-bd_dom"/>
</dbReference>
<dbReference type="InterPro" id="IPR008991">
    <property type="entry name" value="Translation_prot_SH3-like_sf"/>
</dbReference>
<dbReference type="NCBIfam" id="TIGR01171">
    <property type="entry name" value="rplB_bact"/>
    <property type="match status" value="1"/>
</dbReference>
<dbReference type="PANTHER" id="PTHR13691:SF5">
    <property type="entry name" value="LARGE RIBOSOMAL SUBUNIT PROTEIN UL2M"/>
    <property type="match status" value="1"/>
</dbReference>
<dbReference type="PANTHER" id="PTHR13691">
    <property type="entry name" value="RIBOSOMAL PROTEIN L2"/>
    <property type="match status" value="1"/>
</dbReference>
<dbReference type="Pfam" id="PF00181">
    <property type="entry name" value="Ribosomal_L2"/>
    <property type="match status" value="1"/>
</dbReference>
<dbReference type="Pfam" id="PF03947">
    <property type="entry name" value="Ribosomal_L2_C"/>
    <property type="match status" value="1"/>
</dbReference>
<dbReference type="PIRSF" id="PIRSF002158">
    <property type="entry name" value="Ribosomal_L2"/>
    <property type="match status" value="1"/>
</dbReference>
<dbReference type="SMART" id="SM01383">
    <property type="entry name" value="Ribosomal_L2"/>
    <property type="match status" value="1"/>
</dbReference>
<dbReference type="SMART" id="SM01382">
    <property type="entry name" value="Ribosomal_L2_C"/>
    <property type="match status" value="1"/>
</dbReference>
<dbReference type="SUPFAM" id="SSF50249">
    <property type="entry name" value="Nucleic acid-binding proteins"/>
    <property type="match status" value="1"/>
</dbReference>
<dbReference type="SUPFAM" id="SSF50104">
    <property type="entry name" value="Translation proteins SH3-like domain"/>
    <property type="match status" value="1"/>
</dbReference>
<dbReference type="PROSITE" id="PS00467">
    <property type="entry name" value="RIBOSOMAL_L2"/>
    <property type="match status" value="1"/>
</dbReference>
<keyword id="KW-0002">3D-structure</keyword>
<keyword id="KW-1185">Reference proteome</keyword>
<keyword id="KW-0687">Ribonucleoprotein</keyword>
<keyword id="KW-0689">Ribosomal protein</keyword>
<keyword id="KW-0694">RNA-binding</keyword>
<keyword id="KW-0699">rRNA-binding</keyword>
<evidence type="ECO:0000255" key="1">
    <source>
        <dbReference type="HAMAP-Rule" id="MF_01320"/>
    </source>
</evidence>
<evidence type="ECO:0000256" key="2">
    <source>
        <dbReference type="SAM" id="MobiDB-lite"/>
    </source>
</evidence>
<evidence type="ECO:0000305" key="3"/>
<evidence type="ECO:0007829" key="4">
    <source>
        <dbReference type="PDB" id="7OOD"/>
    </source>
</evidence>
<evidence type="ECO:0007829" key="5">
    <source>
        <dbReference type="PDB" id="8P8B"/>
    </source>
</evidence>
<gene>
    <name evidence="1" type="primary">rplB</name>
    <name type="ordered locus">MPN_168</name>
    <name type="ORF">MP663</name>
</gene>
<name>RL2_MYCPN</name>
<organism>
    <name type="scientific">Mycoplasma pneumoniae (strain ATCC 29342 / M129 / Subtype 1)</name>
    <name type="common">Mycoplasmoides pneumoniae</name>
    <dbReference type="NCBI Taxonomy" id="272634"/>
    <lineage>
        <taxon>Bacteria</taxon>
        <taxon>Bacillati</taxon>
        <taxon>Mycoplasmatota</taxon>
        <taxon>Mycoplasmoidales</taxon>
        <taxon>Mycoplasmoidaceae</taxon>
        <taxon>Mycoplasmoides</taxon>
    </lineage>
</organism>
<proteinExistence type="evidence at protein level"/>
<sequence>MPIKKIISRSNSGIHHSTVIDYKKLLTTNKNKPEKSLLVTLKKHGGRNNQGKITVRHQGGRNKRKYRIIDFKRTHYDNIEATVKSIEYDPNRSCFVSLITYANGAKSYIISPDGIKVGDKILASEHPIDIKPGFSMPLAFIPEGTQVHNIELHPKGGGQIARSAGSYARILGQDETGKYVILQLLSGETRKFLKECRATVGVVSNLDHNLVVIGKAGRNRHRGIRPTVRGSAMNPNDHPHGGGEGRSPVGRDAPRTPWGKRHMGVKTRNMKKASTNLIIRNRKGEQY</sequence>
<comment type="function">
    <text evidence="1">One of the primary rRNA binding proteins. Required for association of the 30S and 50S subunits to form the 70S ribosome, for tRNA binding and peptide bond formation. It has been suggested to have peptidyltransferase activity; this is somewhat controversial. Makes several contacts with the 16S rRNA in the 70S ribosome.</text>
</comment>
<comment type="subunit">
    <text evidence="1">Part of the 50S ribosomal subunit. Forms a bridge to the 30S subunit in the 70S ribosome.</text>
</comment>
<comment type="similarity">
    <text evidence="1">Belongs to the universal ribosomal protein uL2 family.</text>
</comment>